<protein>
    <recommendedName>
        <fullName>Increased recombination centers protein 6</fullName>
    </recommendedName>
</protein>
<name>IRC6_YEAST</name>
<feature type="chain" id="PRO_0000202696" description="Increased recombination centers protein 6">
    <location>
        <begin position="1"/>
        <end position="237"/>
    </location>
</feature>
<feature type="strand" evidence="4">
    <location>
        <begin position="9"/>
        <end position="15"/>
    </location>
</feature>
<feature type="helix" evidence="4">
    <location>
        <begin position="16"/>
        <end position="18"/>
    </location>
</feature>
<feature type="helix" evidence="4">
    <location>
        <begin position="19"/>
        <end position="30"/>
    </location>
</feature>
<feature type="strand" evidence="4">
    <location>
        <begin position="39"/>
        <end position="46"/>
    </location>
</feature>
<feature type="strand" evidence="4">
    <location>
        <begin position="51"/>
        <end position="62"/>
    </location>
</feature>
<feature type="helix" evidence="4">
    <location>
        <begin position="64"/>
        <end position="71"/>
    </location>
</feature>
<feature type="helix" evidence="4">
    <location>
        <begin position="74"/>
        <end position="76"/>
    </location>
</feature>
<feature type="helix" evidence="4">
    <location>
        <begin position="77"/>
        <end position="81"/>
    </location>
</feature>
<feature type="strand" evidence="4">
    <location>
        <begin position="83"/>
        <end position="90"/>
    </location>
</feature>
<feature type="helix" evidence="4">
    <location>
        <begin position="92"/>
        <end position="95"/>
    </location>
</feature>
<feature type="helix" evidence="4">
    <location>
        <begin position="97"/>
        <end position="99"/>
    </location>
</feature>
<feature type="helix" evidence="4">
    <location>
        <begin position="101"/>
        <end position="107"/>
    </location>
</feature>
<feature type="strand" evidence="4">
    <location>
        <begin position="113"/>
        <end position="118"/>
    </location>
</feature>
<feature type="helix" evidence="4">
    <location>
        <begin position="125"/>
        <end position="135"/>
    </location>
</feature>
<feature type="strand" evidence="4">
    <location>
        <begin position="138"/>
        <end position="141"/>
    </location>
</feature>
<feature type="strand" evidence="4">
    <location>
        <begin position="143"/>
        <end position="147"/>
    </location>
</feature>
<feature type="helix" evidence="4">
    <location>
        <begin position="165"/>
        <end position="175"/>
    </location>
</feature>
<dbReference type="EMBL" id="D50617">
    <property type="protein sequence ID" value="BAA09282.1"/>
    <property type="molecule type" value="Genomic_DNA"/>
</dbReference>
<dbReference type="EMBL" id="BK006940">
    <property type="protein sequence ID" value="DAA12486.1"/>
    <property type="molecule type" value="Genomic_DNA"/>
</dbReference>
<dbReference type="PIR" id="S56298">
    <property type="entry name" value="S56298"/>
</dbReference>
<dbReference type="RefSeq" id="NP_116701.3">
    <property type="nucleotide sequence ID" value="NM_001180008.3"/>
</dbReference>
<dbReference type="PDB" id="3UC9">
    <property type="method" value="X-ray"/>
    <property type="resolution" value="1.80 A"/>
    <property type="chains" value="A=1-213"/>
</dbReference>
<dbReference type="PDBsum" id="3UC9"/>
<dbReference type="SMR" id="P43615"/>
<dbReference type="BioGRID" id="31201">
    <property type="interactions" value="78"/>
</dbReference>
<dbReference type="DIP" id="DIP-1851N"/>
<dbReference type="FunCoup" id="P43615">
    <property type="interactions" value="34"/>
</dbReference>
<dbReference type="IntAct" id="P43615">
    <property type="interactions" value="3"/>
</dbReference>
<dbReference type="MINT" id="P43615"/>
<dbReference type="STRING" id="4932.YFR043C"/>
<dbReference type="iPTMnet" id="P43615"/>
<dbReference type="PaxDb" id="4932-YFR043C"/>
<dbReference type="PeptideAtlas" id="P43615"/>
<dbReference type="EnsemblFungi" id="YFR043C_mRNA">
    <property type="protein sequence ID" value="YFR043C"/>
    <property type="gene ID" value="YFR043C"/>
</dbReference>
<dbReference type="GeneID" id="850604"/>
<dbReference type="KEGG" id="sce:YFR043C"/>
<dbReference type="AGR" id="SGD:S000001939"/>
<dbReference type="SGD" id="S000001939">
    <property type="gene designation" value="IRC6"/>
</dbReference>
<dbReference type="VEuPathDB" id="FungiDB:YFR043C"/>
<dbReference type="eggNOG" id="ENOG502S7AE">
    <property type="taxonomic scope" value="Eukaryota"/>
</dbReference>
<dbReference type="HOGENOM" id="CLU_079666_0_0_1"/>
<dbReference type="InParanoid" id="P43615"/>
<dbReference type="OMA" id="GMESACT"/>
<dbReference type="OrthoDB" id="10261384at2759"/>
<dbReference type="BioCyc" id="YEAST:G3O-30490-MONOMER"/>
<dbReference type="BioGRID-ORCS" id="850604">
    <property type="hits" value="0 hits in 10 CRISPR screens"/>
</dbReference>
<dbReference type="EvolutionaryTrace" id="P43615"/>
<dbReference type="PRO" id="PR:P43615"/>
<dbReference type="Proteomes" id="UP000002311">
    <property type="component" value="Chromosome VI"/>
</dbReference>
<dbReference type="RNAct" id="P43615">
    <property type="molecule type" value="protein"/>
</dbReference>
<dbReference type="GO" id="GO:0030674">
    <property type="term" value="F:protein-macromolecule adaptor activity"/>
    <property type="evidence" value="ECO:0000314"/>
    <property type="project" value="SGD"/>
</dbReference>
<dbReference type="GO" id="GO:0016192">
    <property type="term" value="P:vesicle-mediated transport"/>
    <property type="evidence" value="ECO:0000316"/>
    <property type="project" value="SGD"/>
</dbReference>
<dbReference type="Gene3D" id="3.40.50.11960">
    <property type="match status" value="1"/>
</dbReference>
<dbReference type="InterPro" id="IPR034627">
    <property type="entry name" value="Irc6"/>
</dbReference>
<dbReference type="PANTHER" id="PTHR28043">
    <property type="entry name" value="INCREASED RECOMBINATION CENTERS PROTEIN 6"/>
    <property type="match status" value="1"/>
</dbReference>
<dbReference type="PANTHER" id="PTHR28043:SF1">
    <property type="entry name" value="INCREASED RECOMBINATION CENTERS PROTEIN 6"/>
    <property type="match status" value="1"/>
</dbReference>
<organism>
    <name type="scientific">Saccharomyces cerevisiae (strain ATCC 204508 / S288c)</name>
    <name type="common">Baker's yeast</name>
    <dbReference type="NCBI Taxonomy" id="559292"/>
    <lineage>
        <taxon>Eukaryota</taxon>
        <taxon>Fungi</taxon>
        <taxon>Dikarya</taxon>
        <taxon>Ascomycota</taxon>
        <taxon>Saccharomycotina</taxon>
        <taxon>Saccharomycetes</taxon>
        <taxon>Saccharomycetales</taxon>
        <taxon>Saccharomycetaceae</taxon>
        <taxon>Saccharomyces</taxon>
    </lineage>
</organism>
<gene>
    <name type="primary">IRC6</name>
    <name type="ordered locus">YFR043C</name>
</gene>
<sequence length="237" mass="27879">MVLQYPQNKILVLSDHPHNFLKTQFLQDLFHCSSTGISIVKDQTWENRYYKVHFDLYIDSCKEIPVWVEEFITPECEPLRNVMAGIILITDIRQTKPQELLHQFMIAAHRNTFVVLANVNEEVEQDEIDELNEIWSNAFTNVIEFVNWKRSKPTVNHNDYGEKLGLDRIQEIIDTHDWLNCEVQPATKIREEIPNEMPLEQIIRNLQSARLKYKSIENSSEADAFANEMADELSRYL</sequence>
<evidence type="ECO:0000269" key="1">
    <source>
    </source>
</evidence>
<evidence type="ECO:0000269" key="2">
    <source>
    </source>
</evidence>
<evidence type="ECO:0000305" key="3"/>
<evidence type="ECO:0007829" key="4">
    <source>
        <dbReference type="PDB" id="3UC9"/>
    </source>
</evidence>
<comment type="function">
    <text evidence="2">Involved in gross chromosomal rearrangements (GCRs) and telomere healing.</text>
</comment>
<comment type="disruption phenotype">
    <text evidence="1">Displays increased levels of spontaneous RAD52 foci in proliferating diploid cells.</text>
</comment>
<comment type="similarity">
    <text evidence="3">Belongs to the IRC6 family.</text>
</comment>
<accession>P43615</accession>
<accession>D6VTS6</accession>
<reference key="1">
    <citation type="journal article" date="1996" name="Yeast">
        <title>Analysis of a 36.2 kb DNA sequence including the right telomere of chromosome VI from Saccharomyces cerevisiae.</title>
        <authorList>
            <person name="Eki T."/>
            <person name="Naitou M."/>
            <person name="Hagiwara H."/>
            <person name="Ozawa M."/>
            <person name="Sasanuma S."/>
            <person name="Sasanuma M."/>
            <person name="Tsuchiya Y."/>
            <person name="Shibata T."/>
            <person name="Hanaoka F."/>
            <person name="Murakami Y."/>
        </authorList>
    </citation>
    <scope>NUCLEOTIDE SEQUENCE [GENOMIC DNA]</scope>
    <source>
        <strain>ATCC 204511 / S288c / AB972</strain>
    </source>
</reference>
<reference key="2">
    <citation type="journal article" date="1995" name="Nat. Genet.">
        <title>Analysis of the nucleotide sequence of chromosome VI from Saccharomyces cerevisiae.</title>
        <authorList>
            <person name="Murakami Y."/>
            <person name="Naitou M."/>
            <person name="Hagiwara H."/>
            <person name="Shibata T."/>
            <person name="Ozawa M."/>
            <person name="Sasanuma S."/>
            <person name="Sasanuma M."/>
            <person name="Tsuchiya Y."/>
            <person name="Soeda E."/>
            <person name="Yokoyama K."/>
            <person name="Yamazaki M."/>
            <person name="Tashiro H."/>
            <person name="Eki T."/>
        </authorList>
    </citation>
    <scope>NUCLEOTIDE SEQUENCE [LARGE SCALE GENOMIC DNA]</scope>
    <source>
        <strain>ATCC 204508 / S288c</strain>
    </source>
</reference>
<reference key="3">
    <citation type="journal article" date="2014" name="G3 (Bethesda)">
        <title>The reference genome sequence of Saccharomyces cerevisiae: Then and now.</title>
        <authorList>
            <person name="Engel S.R."/>
            <person name="Dietrich F.S."/>
            <person name="Fisk D.G."/>
            <person name="Binkley G."/>
            <person name="Balakrishnan R."/>
            <person name="Costanzo M.C."/>
            <person name="Dwight S.S."/>
            <person name="Hitz B.C."/>
            <person name="Karra K."/>
            <person name="Nash R.S."/>
            <person name="Weng S."/>
            <person name="Wong E.D."/>
            <person name="Lloyd P."/>
            <person name="Skrzypek M.S."/>
            <person name="Miyasato S.R."/>
            <person name="Simison M."/>
            <person name="Cherry J.M."/>
        </authorList>
    </citation>
    <scope>GENOME REANNOTATION</scope>
    <source>
        <strain>ATCC 204508 / S288c</strain>
    </source>
</reference>
<reference key="4">
    <citation type="journal article" date="2007" name="PLoS Genet.">
        <title>Genome-wide analysis of Rad52 foci reveals diverse mechanisms impacting recombination.</title>
        <authorList>
            <person name="Alvaro D."/>
            <person name="Lisby M."/>
            <person name="Rothstein R."/>
        </authorList>
    </citation>
    <scope>DISRUPTION PHENOTYPE</scope>
</reference>
<reference key="5">
    <citation type="journal article" date="2010" name="Genes Dev.">
        <title>De novo telomere formation is suppressed by the Mec1-dependent inhibition of Cdc13 accumulation at DNA breaks.</title>
        <authorList>
            <person name="Zhang W."/>
            <person name="Durocher D."/>
        </authorList>
    </citation>
    <scope>FUNCTION</scope>
</reference>
<proteinExistence type="evidence at protein level"/>
<keyword id="KW-0002">3D-structure</keyword>
<keyword id="KW-0160">Chromosomal rearrangement</keyword>
<keyword id="KW-1185">Reference proteome</keyword>